<organism>
    <name type="scientific">Haloferax volcanii (strain ATCC 29605 / DSM 3757 / JCM 8879 / NBRC 14742 / NCIMB 2012 / VKM B-1768 / DS2)</name>
    <name type="common">Halobacterium volcanii</name>
    <dbReference type="NCBI Taxonomy" id="309800"/>
    <lineage>
        <taxon>Archaea</taxon>
        <taxon>Methanobacteriati</taxon>
        <taxon>Methanobacteriota</taxon>
        <taxon>Stenosarchaea group</taxon>
        <taxon>Halobacteria</taxon>
        <taxon>Halobacteriales</taxon>
        <taxon>Haloferacaceae</taxon>
        <taxon>Haloferax</taxon>
    </lineage>
</organism>
<feature type="chain" id="PRO_0000434433" description="NAD-dependent glucose-6-phosphate dehydrogenase">
    <location>
        <begin position="1"/>
        <end position="262"/>
    </location>
</feature>
<feature type="active site" description="Proton acceptor" evidence="1 2">
    <location>
        <position position="152"/>
    </location>
</feature>
<feature type="binding site" evidence="1 2">
    <location>
        <position position="90"/>
    </location>
    <ligand>
        <name>NAD(+)</name>
        <dbReference type="ChEBI" id="CHEBI:57540"/>
    </ligand>
</feature>
<feature type="binding site" evidence="1 2">
    <location>
        <position position="115"/>
    </location>
    <ligand>
        <name>NAD(+)</name>
        <dbReference type="ChEBI" id="CHEBI:57540"/>
    </ligand>
</feature>
<feature type="binding site" evidence="1 2">
    <location>
        <position position="152"/>
    </location>
    <ligand>
        <name>NAD(+)</name>
        <dbReference type="ChEBI" id="CHEBI:57540"/>
    </ligand>
</feature>
<feature type="binding site" evidence="1 2">
    <location>
        <position position="156"/>
    </location>
    <ligand>
        <name>NAD(+)</name>
        <dbReference type="ChEBI" id="CHEBI:57540"/>
    </ligand>
</feature>
<gene>
    <name evidence="4" type="primary">azf</name>
    <name evidence="6" type="ordered locus">HVO_0511</name>
    <name evidence="7" type="ORF">C498_16134</name>
</gene>
<dbReference type="EC" id="1.1.1.388" evidence="3"/>
<dbReference type="EMBL" id="CP001956">
    <property type="protein sequence ID" value="ADE03728.1"/>
    <property type="molecule type" value="Genomic_DNA"/>
</dbReference>
<dbReference type="EMBL" id="AOHU01000100">
    <property type="protein sequence ID" value="ELY25894.1"/>
    <property type="molecule type" value="Genomic_DNA"/>
</dbReference>
<dbReference type="RefSeq" id="WP_004044412.1">
    <property type="nucleotide sequence ID" value="NC_013967.1"/>
</dbReference>
<dbReference type="SMR" id="D4GS48"/>
<dbReference type="STRING" id="309800.HVO_0511"/>
<dbReference type="PaxDb" id="309800-C498_16134"/>
<dbReference type="EnsemblBacteria" id="ADE03728">
    <property type="protein sequence ID" value="ADE03728"/>
    <property type="gene ID" value="HVO_0511"/>
</dbReference>
<dbReference type="GeneID" id="8925817"/>
<dbReference type="KEGG" id="hvo:HVO_0511"/>
<dbReference type="PATRIC" id="fig|309800.29.peg.3125"/>
<dbReference type="eggNOG" id="arCOG04704">
    <property type="taxonomic scope" value="Archaea"/>
</dbReference>
<dbReference type="HOGENOM" id="CLU_079334_1_0_2"/>
<dbReference type="OrthoDB" id="311692at2157"/>
<dbReference type="BioCyc" id="MetaCyc:MONOMER-20543"/>
<dbReference type="BRENDA" id="1.1.1.388">
    <property type="organism ID" value="2561"/>
</dbReference>
<dbReference type="UniPathway" id="UPA00115"/>
<dbReference type="Proteomes" id="UP000008243">
    <property type="component" value="Chromosome"/>
</dbReference>
<dbReference type="Proteomes" id="UP000011532">
    <property type="component" value="Unassembled WGS sequence"/>
</dbReference>
<dbReference type="GO" id="GO:0004345">
    <property type="term" value="F:glucose-6-phosphate dehydrogenase activity"/>
    <property type="evidence" value="ECO:0007669"/>
    <property type="project" value="InterPro"/>
</dbReference>
<dbReference type="GO" id="GO:0070403">
    <property type="term" value="F:NAD+ binding"/>
    <property type="evidence" value="ECO:0007669"/>
    <property type="project" value="InterPro"/>
</dbReference>
<dbReference type="GO" id="GO:0006006">
    <property type="term" value="P:glucose metabolic process"/>
    <property type="evidence" value="ECO:0007669"/>
    <property type="project" value="UniProtKB-KW"/>
</dbReference>
<dbReference type="GO" id="GO:0009051">
    <property type="term" value="P:pentose-phosphate shunt, oxidative branch"/>
    <property type="evidence" value="ECO:0007669"/>
    <property type="project" value="UniProtKB-UniRule"/>
</dbReference>
<dbReference type="CDD" id="cd08946">
    <property type="entry name" value="SDR_e"/>
    <property type="match status" value="1"/>
</dbReference>
<dbReference type="Gene3D" id="3.40.50.720">
    <property type="entry name" value="NAD(P)-binding Rossmann-like Domain"/>
    <property type="match status" value="1"/>
</dbReference>
<dbReference type="HAMAP" id="MF_02046">
    <property type="entry name" value="Glc6PDH_archaea"/>
    <property type="match status" value="1"/>
</dbReference>
<dbReference type="InterPro" id="IPR001509">
    <property type="entry name" value="Epimerase_deHydtase"/>
</dbReference>
<dbReference type="InterPro" id="IPR032884">
    <property type="entry name" value="Glc6PDH_archaea"/>
</dbReference>
<dbReference type="InterPro" id="IPR036291">
    <property type="entry name" value="NAD(P)-bd_dom_sf"/>
</dbReference>
<dbReference type="NCBIfam" id="NF041293">
    <property type="entry name" value="G6PDh_Azf"/>
    <property type="match status" value="1"/>
</dbReference>
<dbReference type="PANTHER" id="PTHR43103:SF5">
    <property type="entry name" value="4-EPIMERASE, PUTATIVE (AFU_ORTHOLOGUE AFUA_7G00360)-RELATED"/>
    <property type="match status" value="1"/>
</dbReference>
<dbReference type="PANTHER" id="PTHR43103">
    <property type="entry name" value="NUCLEOSIDE-DIPHOSPHATE-SUGAR EPIMERASE"/>
    <property type="match status" value="1"/>
</dbReference>
<dbReference type="Pfam" id="PF01370">
    <property type="entry name" value="Epimerase"/>
    <property type="match status" value="1"/>
</dbReference>
<dbReference type="SUPFAM" id="SSF51735">
    <property type="entry name" value="NAD(P)-binding Rossmann-fold domains"/>
    <property type="match status" value="1"/>
</dbReference>
<reference key="1">
    <citation type="journal article" date="2010" name="PLoS ONE">
        <title>The complete genome sequence of Haloferax volcanii DS2, a model archaeon.</title>
        <authorList>
            <person name="Hartman A.L."/>
            <person name="Norais C."/>
            <person name="Badger J.H."/>
            <person name="Delmas S."/>
            <person name="Haldenby S."/>
            <person name="Madupu R."/>
            <person name="Robinson J."/>
            <person name="Khouri H."/>
            <person name="Ren Q."/>
            <person name="Lowe T.M."/>
            <person name="Maupin-Furlow J."/>
            <person name="Pohlschroder M."/>
            <person name="Daniels C."/>
            <person name="Pfeiffer F."/>
            <person name="Allers T."/>
            <person name="Eisen J.A."/>
        </authorList>
    </citation>
    <scope>NUCLEOTIDE SEQUENCE [LARGE SCALE GENOMIC DNA]</scope>
    <source>
        <strain>ATCC 29605 / DSM 3757 / JCM 8879 / NBRC 14742 / NCIMB 2012 / VKM B-1768 / DS2</strain>
    </source>
</reference>
<reference key="2">
    <citation type="journal article" date="2014" name="PLoS Genet.">
        <title>Phylogenetically driven sequencing of extremely halophilic archaea reveals strategies for static and dynamic osmo-response.</title>
        <authorList>
            <person name="Becker E.A."/>
            <person name="Seitzer P.M."/>
            <person name="Tritt A."/>
            <person name="Larsen D."/>
            <person name="Krusor M."/>
            <person name="Yao A.I."/>
            <person name="Wu D."/>
            <person name="Madern D."/>
            <person name="Eisen J.A."/>
            <person name="Darling A.E."/>
            <person name="Facciotti M.T."/>
        </authorList>
    </citation>
    <scope>NUCLEOTIDE SEQUENCE [LARGE SCALE GENOMIC DNA]</scope>
    <source>
        <strain>ATCC 29605 / DSM 3757 / JCM 8879 / NBRC 14742 / NCIMB 2012 / VKM B-1768 / DS2</strain>
    </source>
</reference>
<reference key="3">
    <citation type="journal article" date="2015" name="FEBS Lett.">
        <title>The oxidative pentose phosphate pathway in the haloarchaeon Haloferax volcanii involves a novel type of glucose-6-phosphate dehydrogenase -- The archaeal Zwischenferment.</title>
        <authorList>
            <person name="Pickl A."/>
            <person name="Schoenheit P."/>
        </authorList>
    </citation>
    <scope>FUNCTION</scope>
    <scope>CATALYTIC ACTIVITY</scope>
    <scope>BIOPHYSICOCHEMICAL PROPERTIES</scope>
    <scope>PATHWAY</scope>
    <scope>SUBUNIT</scope>
    <scope>DISRUPTION PHENOTYPE</scope>
    <source>
        <strain>DS2 / DS70 / H26</strain>
    </source>
</reference>
<accession>D4GS48</accession>
<comment type="function">
    <text evidence="3">Catalyzes the NAD-dependent oxidation of glucose 6-phosphate to 6-phosphogluconolactone.</text>
</comment>
<comment type="catalytic activity">
    <reaction evidence="3">
        <text>D-glucose 6-phosphate + NAD(+) = 6-phospho-D-glucono-1,5-lactone + NADH + H(+)</text>
        <dbReference type="Rhea" id="RHEA:38215"/>
        <dbReference type="ChEBI" id="CHEBI:15378"/>
        <dbReference type="ChEBI" id="CHEBI:57540"/>
        <dbReference type="ChEBI" id="CHEBI:57945"/>
        <dbReference type="ChEBI" id="CHEBI:57955"/>
        <dbReference type="ChEBI" id="CHEBI:61548"/>
        <dbReference type="EC" id="1.1.1.388"/>
    </reaction>
</comment>
<comment type="biophysicochemical properties">
    <kinetics>
        <KM evidence="3">3.7 mM for glucose 6-phosphate</KM>
        <KM evidence="3">0.43 mM for NAD(+)</KM>
        <KM evidence="3">5.2 mM for NADP(+)</KM>
        <Vmax evidence="3">212.0 umol/min/mg enzyme (with NAD(+) as electron acceptor)</Vmax>
        <Vmax evidence="3">11.0 umol/min/mg enzyme (with NADP(+) as electron acceptor)</Vmax>
        <text evidence="3">The catalytic efficiency with NAD(+) is about 230-fold higher than with NADP(+), indicating that NAD(+) is the physiological electron acceptor.</text>
    </kinetics>
    <phDependence>
        <text evidence="3">Optimum pH is 8.5.</text>
    </phDependence>
</comment>
<comment type="pathway">
    <text evidence="3">Carbohydrate degradation; pentose phosphate pathway.</text>
</comment>
<comment type="subunit">
    <text evidence="3">Homodimer.</text>
</comment>
<comment type="disruption phenotype">
    <text evidence="3">Deletion mutants do not grow on glucose.</text>
</comment>
<comment type="similarity">
    <text evidence="5">Belongs to the NAD(P)-dependent epimerase/dehydratase family.</text>
</comment>
<protein>
    <recommendedName>
        <fullName evidence="5">NAD-dependent glucose-6-phosphate dehydrogenase</fullName>
        <shortName evidence="4">Glc6PDH</shortName>
        <ecNumber evidence="3">1.1.1.388</ecNumber>
    </recommendedName>
    <alternativeName>
        <fullName evidence="4">Archaeal zwischenferment</fullName>
    </alternativeName>
</protein>
<evidence type="ECO:0000250" key="1">
    <source>
        <dbReference type="UniProtKB" id="P09147"/>
    </source>
</evidence>
<evidence type="ECO:0000255" key="2">
    <source>
        <dbReference type="HAMAP-Rule" id="MF_02046"/>
    </source>
</evidence>
<evidence type="ECO:0000269" key="3">
    <source>
    </source>
</evidence>
<evidence type="ECO:0000303" key="4">
    <source>
    </source>
</evidence>
<evidence type="ECO:0000305" key="5"/>
<evidence type="ECO:0000312" key="6">
    <source>
        <dbReference type="EMBL" id="ADE03728.1"/>
    </source>
</evidence>
<evidence type="ECO:0000312" key="7">
    <source>
        <dbReference type="EMBL" id="ELY25894.1"/>
    </source>
</evidence>
<proteinExistence type="evidence at protein level"/>
<sequence length="262" mass="29365">MDQPVLLTGAGGRVGQAILGHIGDAYDWRLLDREPLSDEKIPDSVDSTEVYVADVTDETAVRNAMDGVHAVIHLAGDPRPEAPWDSVLRNNIDGTQQMFDAAVDVGVEKFAFASSNHAVGAYETTDRTPDMYRPHHEFRLDGTELPRPSNLYGVSKAAGETLGRYYHDHHDISVVNVRIGNLTQHHPPKEYERGQAMWLSYRDCGHLFECCIEADYDYEIVYGISDNDRKYYSIDRARAVLGYDPQDNSAEFTFEGEPLDEA</sequence>
<name>G6PD_HALVD</name>
<keyword id="KW-0119">Carbohydrate metabolism</keyword>
<keyword id="KW-0313">Glucose metabolism</keyword>
<keyword id="KW-0520">NAD</keyword>
<keyword id="KW-0560">Oxidoreductase</keyword>
<keyword id="KW-1185">Reference proteome</keyword>